<keyword id="KW-0312">Gluconeogenesis</keyword>
<keyword id="KW-0324">Glycolysis</keyword>
<keyword id="KW-0413">Isomerase</keyword>
<keyword id="KW-1185">Reference proteome</keyword>
<accession>Q89WK1</accession>
<protein>
    <recommendedName>
        <fullName evidence="1">2,3-bisphosphoglycerate-dependent phosphoglycerate mutase</fullName>
        <shortName evidence="1">BPG-dependent PGAM</shortName>
        <shortName evidence="1">PGAM</shortName>
        <shortName evidence="1">Phosphoglyceromutase</shortName>
        <shortName evidence="1">dPGM</shortName>
        <ecNumber evidence="1">5.4.2.11</ecNumber>
    </recommendedName>
</protein>
<name>GPMA_BRADU</name>
<proteinExistence type="inferred from homology"/>
<dbReference type="EC" id="5.4.2.11" evidence="1"/>
<dbReference type="EMBL" id="BA000040">
    <property type="protein sequence ID" value="BAC45951.1"/>
    <property type="molecule type" value="Genomic_DNA"/>
</dbReference>
<dbReference type="RefSeq" id="NP_767326.1">
    <property type="nucleotide sequence ID" value="NC_004463.1"/>
</dbReference>
<dbReference type="RefSeq" id="WP_011083512.1">
    <property type="nucleotide sequence ID" value="NC_004463.1"/>
</dbReference>
<dbReference type="SMR" id="Q89WK1"/>
<dbReference type="FunCoup" id="Q89WK1">
    <property type="interactions" value="581"/>
</dbReference>
<dbReference type="STRING" id="224911.AAV28_00265"/>
<dbReference type="EnsemblBacteria" id="BAC45951">
    <property type="protein sequence ID" value="BAC45951"/>
    <property type="gene ID" value="BAC45951"/>
</dbReference>
<dbReference type="GeneID" id="46487959"/>
<dbReference type="KEGG" id="bja:blr0686"/>
<dbReference type="PATRIC" id="fig|224911.44.peg.56"/>
<dbReference type="eggNOG" id="COG0588">
    <property type="taxonomic scope" value="Bacteria"/>
</dbReference>
<dbReference type="HOGENOM" id="CLU_033323_1_4_5"/>
<dbReference type="InParanoid" id="Q89WK1"/>
<dbReference type="OrthoDB" id="9781415at2"/>
<dbReference type="PhylomeDB" id="Q89WK1"/>
<dbReference type="UniPathway" id="UPA00109">
    <property type="reaction ID" value="UER00186"/>
</dbReference>
<dbReference type="Proteomes" id="UP000002526">
    <property type="component" value="Chromosome"/>
</dbReference>
<dbReference type="GO" id="GO:0004619">
    <property type="term" value="F:phosphoglycerate mutase activity"/>
    <property type="evidence" value="ECO:0007669"/>
    <property type="project" value="UniProtKB-EC"/>
</dbReference>
<dbReference type="GO" id="GO:0006094">
    <property type="term" value="P:gluconeogenesis"/>
    <property type="evidence" value="ECO:0007669"/>
    <property type="project" value="UniProtKB-UniRule"/>
</dbReference>
<dbReference type="GO" id="GO:0006096">
    <property type="term" value="P:glycolytic process"/>
    <property type="evidence" value="ECO:0007669"/>
    <property type="project" value="UniProtKB-UniRule"/>
</dbReference>
<dbReference type="CDD" id="cd07067">
    <property type="entry name" value="HP_PGM_like"/>
    <property type="match status" value="1"/>
</dbReference>
<dbReference type="Gene3D" id="3.40.50.1240">
    <property type="entry name" value="Phosphoglycerate mutase-like"/>
    <property type="match status" value="1"/>
</dbReference>
<dbReference type="HAMAP" id="MF_01039">
    <property type="entry name" value="PGAM_GpmA"/>
    <property type="match status" value="1"/>
</dbReference>
<dbReference type="InterPro" id="IPR013078">
    <property type="entry name" value="His_Pase_superF_clade-1"/>
</dbReference>
<dbReference type="InterPro" id="IPR029033">
    <property type="entry name" value="His_PPase_superfam"/>
</dbReference>
<dbReference type="InterPro" id="IPR001345">
    <property type="entry name" value="PG/BPGM_mutase_AS"/>
</dbReference>
<dbReference type="InterPro" id="IPR005952">
    <property type="entry name" value="Phosphogly_mut1"/>
</dbReference>
<dbReference type="NCBIfam" id="TIGR01258">
    <property type="entry name" value="pgm_1"/>
    <property type="match status" value="1"/>
</dbReference>
<dbReference type="NCBIfam" id="NF002339">
    <property type="entry name" value="PRK01295.1"/>
    <property type="match status" value="1"/>
</dbReference>
<dbReference type="PANTHER" id="PTHR11931">
    <property type="entry name" value="PHOSPHOGLYCERATE MUTASE"/>
    <property type="match status" value="1"/>
</dbReference>
<dbReference type="Pfam" id="PF00300">
    <property type="entry name" value="His_Phos_1"/>
    <property type="match status" value="1"/>
</dbReference>
<dbReference type="SMART" id="SM00855">
    <property type="entry name" value="PGAM"/>
    <property type="match status" value="1"/>
</dbReference>
<dbReference type="SUPFAM" id="SSF53254">
    <property type="entry name" value="Phosphoglycerate mutase-like"/>
    <property type="match status" value="1"/>
</dbReference>
<dbReference type="PROSITE" id="PS00175">
    <property type="entry name" value="PG_MUTASE"/>
    <property type="match status" value="1"/>
</dbReference>
<comment type="function">
    <text evidence="1">Catalyzes the interconversion of 2-phosphoglycerate and 3-phosphoglycerate.</text>
</comment>
<comment type="catalytic activity">
    <reaction evidence="1">
        <text>(2R)-2-phosphoglycerate = (2R)-3-phosphoglycerate</text>
        <dbReference type="Rhea" id="RHEA:15901"/>
        <dbReference type="ChEBI" id="CHEBI:58272"/>
        <dbReference type="ChEBI" id="CHEBI:58289"/>
        <dbReference type="EC" id="5.4.2.11"/>
    </reaction>
</comment>
<comment type="pathway">
    <text evidence="1">Carbohydrate degradation; glycolysis; pyruvate from D-glyceraldehyde 3-phosphate: step 3/5.</text>
</comment>
<comment type="subunit">
    <text evidence="1">Homodimer.</text>
</comment>
<comment type="similarity">
    <text evidence="1">Belongs to the phosphoglycerate mutase family. BPG-dependent PGAM subfamily.</text>
</comment>
<organism>
    <name type="scientific">Bradyrhizobium diazoefficiens (strain JCM 10833 / BCRC 13528 / IAM 13628 / NBRC 14792 / USDA 110)</name>
    <dbReference type="NCBI Taxonomy" id="224911"/>
    <lineage>
        <taxon>Bacteria</taxon>
        <taxon>Pseudomonadati</taxon>
        <taxon>Pseudomonadota</taxon>
        <taxon>Alphaproteobacteria</taxon>
        <taxon>Hyphomicrobiales</taxon>
        <taxon>Nitrobacteraceae</taxon>
        <taxon>Bradyrhizobium</taxon>
    </lineage>
</organism>
<feature type="chain" id="PRO_0000179855" description="2,3-bisphosphoglycerate-dependent phosphoglycerate mutase">
    <location>
        <begin position="1"/>
        <end position="207"/>
    </location>
</feature>
<feature type="active site" description="Tele-phosphohistidine intermediate" evidence="1">
    <location>
        <position position="11"/>
    </location>
</feature>
<feature type="active site" description="Proton donor/acceptor" evidence="1">
    <location>
        <position position="89"/>
    </location>
</feature>
<feature type="binding site" evidence="1">
    <location>
        <begin position="10"/>
        <end position="17"/>
    </location>
    <ligand>
        <name>substrate</name>
    </ligand>
</feature>
<feature type="binding site" evidence="1">
    <location>
        <begin position="23"/>
        <end position="24"/>
    </location>
    <ligand>
        <name>substrate</name>
    </ligand>
</feature>
<feature type="binding site" evidence="1">
    <location>
        <position position="62"/>
    </location>
    <ligand>
        <name>substrate</name>
    </ligand>
</feature>
<feature type="binding site" evidence="1">
    <location>
        <begin position="89"/>
        <end position="92"/>
    </location>
    <ligand>
        <name>substrate</name>
    </ligand>
</feature>
<feature type="binding site" evidence="1">
    <location>
        <position position="100"/>
    </location>
    <ligand>
        <name>substrate</name>
    </ligand>
</feature>
<feature type="binding site" evidence="1">
    <location>
        <begin position="116"/>
        <end position="117"/>
    </location>
    <ligand>
        <name>substrate</name>
    </ligand>
</feature>
<feature type="binding site" evidence="1">
    <location>
        <begin position="160"/>
        <end position="161"/>
    </location>
    <ligand>
        <name>substrate</name>
    </ligand>
</feature>
<feature type="site" description="Transition state stabilizer" evidence="1">
    <location>
        <position position="159"/>
    </location>
</feature>
<sequence length="207" mass="22910">MSERLLVLVRHGQSEWNLKNLFTGWKDPDLTEQGVAEAREAGRKLKAQGLVFDVAYTSVLTRAQHTLDLILGELGQKGLPTEKNLALNERDYGDLSGLNKDDARKKWGEDQVLIWRRSYDVPPPGGESLKDTLARALPYYVQEILPSVLNGKRTLVAAHGNSLRALIMVLEKLSPEGILKRELATGVPIIYRLNADSTVASKLDLAG</sequence>
<reference key="1">
    <citation type="journal article" date="2002" name="DNA Res.">
        <title>Complete genomic sequence of nitrogen-fixing symbiotic bacterium Bradyrhizobium japonicum USDA110.</title>
        <authorList>
            <person name="Kaneko T."/>
            <person name="Nakamura Y."/>
            <person name="Sato S."/>
            <person name="Minamisawa K."/>
            <person name="Uchiumi T."/>
            <person name="Sasamoto S."/>
            <person name="Watanabe A."/>
            <person name="Idesawa K."/>
            <person name="Iriguchi M."/>
            <person name="Kawashima K."/>
            <person name="Kohara M."/>
            <person name="Matsumoto M."/>
            <person name="Shimpo S."/>
            <person name="Tsuruoka H."/>
            <person name="Wada T."/>
            <person name="Yamada M."/>
            <person name="Tabata S."/>
        </authorList>
    </citation>
    <scope>NUCLEOTIDE SEQUENCE [LARGE SCALE GENOMIC DNA]</scope>
    <source>
        <strain>JCM 10833 / BCRC 13528 / IAM 13628 / NBRC 14792 / USDA 110</strain>
    </source>
</reference>
<gene>
    <name evidence="1" type="primary">gpmA</name>
    <name type="ordered locus">blr0686</name>
</gene>
<evidence type="ECO:0000255" key="1">
    <source>
        <dbReference type="HAMAP-Rule" id="MF_01039"/>
    </source>
</evidence>